<sequence>MSATAPFKTLSAKAAFQLDQELMSTGEFSIDQLMELAGLAVAKTIYKEYPPNEATTTTKNKFNPNKVLVLVGPGNNGGDGLVAARHLKLWNYDPIIYYPKRPASNQLYSRLIKQLQDLNVPELTTLTEVKHLLDSRDSKIKIIIDSIFGFSFKPPIREPFKDLINYLGQNHDHLPPIVSVDIPSGWDVDEGPGTEIDIQASCLISLTAPKPCAKLFVNSGPDKIHYLGGRFINPRIAKEYGIEDIVNKYQGDELIVKL</sequence>
<feature type="chain" id="PRO_0000416331" description="NAD(P)H-hydrate epimerase">
    <location>
        <begin position="1"/>
        <end position="258"/>
    </location>
</feature>
<feature type="domain" description="YjeF N-terminal" evidence="1">
    <location>
        <begin position="15"/>
        <end position="244"/>
    </location>
</feature>
<feature type="binding site" evidence="1">
    <location>
        <begin position="75"/>
        <end position="79"/>
    </location>
    <ligand>
        <name>(6S)-NADPHX</name>
        <dbReference type="ChEBI" id="CHEBI:64076"/>
    </ligand>
</feature>
<feature type="binding site" evidence="1">
    <location>
        <position position="76"/>
    </location>
    <ligand>
        <name>K(+)</name>
        <dbReference type="ChEBI" id="CHEBI:29103"/>
    </ligand>
</feature>
<feature type="binding site" evidence="1">
    <location>
        <position position="145"/>
    </location>
    <ligand>
        <name>K(+)</name>
        <dbReference type="ChEBI" id="CHEBI:29103"/>
    </ligand>
</feature>
<feature type="binding site" evidence="1">
    <location>
        <begin position="149"/>
        <end position="155"/>
    </location>
    <ligand>
        <name>(6S)-NADPHX</name>
        <dbReference type="ChEBI" id="CHEBI:64076"/>
    </ligand>
</feature>
<feature type="binding site" evidence="1">
    <location>
        <position position="181"/>
    </location>
    <ligand>
        <name>(6S)-NADPHX</name>
        <dbReference type="ChEBI" id="CHEBI:64076"/>
    </ligand>
</feature>
<feature type="binding site" evidence="1">
    <location>
        <position position="184"/>
    </location>
    <ligand>
        <name>K(+)</name>
        <dbReference type="ChEBI" id="CHEBI:29103"/>
    </ligand>
</feature>
<comment type="function">
    <text evidence="1">Catalyzes the epimerization of the S- and R-forms of NAD(P)HX, a damaged form of NAD(P)H that is a result of enzymatic or heat-dependent hydration. This is a prerequisite for the S-specific NAD(P)H-hydrate dehydratase to allow the repair of both epimers of NAD(P)HX.</text>
</comment>
<comment type="catalytic activity">
    <reaction>
        <text>(6R)-NADHX = (6S)-NADHX</text>
        <dbReference type="Rhea" id="RHEA:32215"/>
        <dbReference type="ChEBI" id="CHEBI:64074"/>
        <dbReference type="ChEBI" id="CHEBI:64075"/>
        <dbReference type="EC" id="5.1.99.6"/>
    </reaction>
</comment>
<comment type="catalytic activity">
    <reaction>
        <text>(6R)-NADPHX = (6S)-NADPHX</text>
        <dbReference type="Rhea" id="RHEA:32227"/>
        <dbReference type="ChEBI" id="CHEBI:64076"/>
        <dbReference type="ChEBI" id="CHEBI:64077"/>
        <dbReference type="EC" id="5.1.99.6"/>
    </reaction>
</comment>
<comment type="cofactor">
    <cofactor evidence="1">
        <name>K(+)</name>
        <dbReference type="ChEBI" id="CHEBI:29103"/>
    </cofactor>
    <text evidence="1">Binds 1 potassium ion per subunit.</text>
</comment>
<comment type="subcellular location">
    <subcellularLocation>
        <location evidence="1">Cytoplasm</location>
    </subcellularLocation>
    <subcellularLocation>
        <location evidence="1">Mitochondrion</location>
    </subcellularLocation>
</comment>
<comment type="similarity">
    <text evidence="1">Belongs to the NnrE/AIBP family.</text>
</comment>
<comment type="sequence caution" evidence="2">
    <conflict type="erroneous initiation">
        <sequence resource="EMBL-CDS" id="AOW25907"/>
    </conflict>
    <text>Extended N-terminus.</text>
</comment>
<protein>
    <recommendedName>
        <fullName evidence="1">NAD(P)H-hydrate epimerase</fullName>
        <ecNumber>5.1.99.6</ecNumber>
    </recommendedName>
    <alternativeName>
        <fullName evidence="1">NAD(P)HX epimerase</fullName>
    </alternativeName>
</protein>
<dbReference type="EC" id="5.1.99.6"/>
<dbReference type="EMBL" id="CP017623">
    <property type="protein sequence ID" value="AOW25907.1"/>
    <property type="status" value="ALT_INIT"/>
    <property type="molecule type" value="Genomic_DNA"/>
</dbReference>
<dbReference type="RefSeq" id="XP_713773.1">
    <property type="nucleotide sequence ID" value="XM_708680.2"/>
</dbReference>
<dbReference type="SMR" id="Q59VX9"/>
<dbReference type="FunCoup" id="Q59VX9">
    <property type="interactions" value="279"/>
</dbReference>
<dbReference type="STRING" id="237561.Q59VX9"/>
<dbReference type="GeneID" id="3644595"/>
<dbReference type="KEGG" id="cal:CAALFM_C102220CA"/>
<dbReference type="eggNOG" id="KOG2585">
    <property type="taxonomic scope" value="Eukaryota"/>
</dbReference>
<dbReference type="HOGENOM" id="CLU_024853_3_0_1"/>
<dbReference type="InParanoid" id="Q59VX9"/>
<dbReference type="OrthoDB" id="10064708at2759"/>
<dbReference type="PRO" id="PR:Q59VX9"/>
<dbReference type="Proteomes" id="UP000000559">
    <property type="component" value="Chromosome 1"/>
</dbReference>
<dbReference type="GO" id="GO:0005739">
    <property type="term" value="C:mitochondrion"/>
    <property type="evidence" value="ECO:0000318"/>
    <property type="project" value="GO_Central"/>
</dbReference>
<dbReference type="GO" id="GO:0046872">
    <property type="term" value="F:metal ion binding"/>
    <property type="evidence" value="ECO:0007669"/>
    <property type="project" value="UniProtKB-KW"/>
</dbReference>
<dbReference type="GO" id="GO:0052856">
    <property type="term" value="F:NAD(P)HX epimerase activity"/>
    <property type="evidence" value="ECO:0000318"/>
    <property type="project" value="GO_Central"/>
</dbReference>
<dbReference type="GO" id="GO:0000166">
    <property type="term" value="F:nucleotide binding"/>
    <property type="evidence" value="ECO:0007669"/>
    <property type="project" value="UniProtKB-KW"/>
</dbReference>
<dbReference type="FunFam" id="3.40.50.10260:FF:000005">
    <property type="entry name" value="NAD(P)H-hydrate epimerase"/>
    <property type="match status" value="1"/>
</dbReference>
<dbReference type="Gene3D" id="3.40.50.10260">
    <property type="entry name" value="YjeF N-terminal domain"/>
    <property type="match status" value="1"/>
</dbReference>
<dbReference type="HAMAP" id="MF_01966">
    <property type="entry name" value="NADHX_epimerase"/>
    <property type="match status" value="1"/>
</dbReference>
<dbReference type="InterPro" id="IPR004443">
    <property type="entry name" value="YjeF_N_dom"/>
</dbReference>
<dbReference type="InterPro" id="IPR036652">
    <property type="entry name" value="YjeF_N_dom_sf"/>
</dbReference>
<dbReference type="InterPro" id="IPR032976">
    <property type="entry name" value="YJEFN_prot_NAXE-like"/>
</dbReference>
<dbReference type="NCBIfam" id="TIGR00197">
    <property type="entry name" value="yjeF_nterm"/>
    <property type="match status" value="1"/>
</dbReference>
<dbReference type="PANTHER" id="PTHR13232">
    <property type="entry name" value="NAD(P)H-HYDRATE EPIMERASE"/>
    <property type="match status" value="1"/>
</dbReference>
<dbReference type="PANTHER" id="PTHR13232:SF10">
    <property type="entry name" value="NAD(P)H-HYDRATE EPIMERASE"/>
    <property type="match status" value="1"/>
</dbReference>
<dbReference type="Pfam" id="PF03853">
    <property type="entry name" value="YjeF_N"/>
    <property type="match status" value="1"/>
</dbReference>
<dbReference type="SUPFAM" id="SSF64153">
    <property type="entry name" value="YjeF N-terminal domain-like"/>
    <property type="match status" value="1"/>
</dbReference>
<dbReference type="PROSITE" id="PS51385">
    <property type="entry name" value="YJEF_N"/>
    <property type="match status" value="1"/>
</dbReference>
<accession>Q59VX9</accession>
<accession>A0A1D8PCP3</accession>
<proteinExistence type="inferred from homology"/>
<reference key="1">
    <citation type="journal article" date="2004" name="Proc. Natl. Acad. Sci. U.S.A.">
        <title>The diploid genome sequence of Candida albicans.</title>
        <authorList>
            <person name="Jones T."/>
            <person name="Federspiel N.A."/>
            <person name="Chibana H."/>
            <person name="Dungan J."/>
            <person name="Kalman S."/>
            <person name="Magee B.B."/>
            <person name="Newport G."/>
            <person name="Thorstenson Y.R."/>
            <person name="Agabian N."/>
            <person name="Magee P.T."/>
            <person name="Davis R.W."/>
            <person name="Scherer S."/>
        </authorList>
    </citation>
    <scope>NUCLEOTIDE SEQUENCE [LARGE SCALE GENOMIC DNA]</scope>
    <source>
        <strain>SC5314 / ATCC MYA-2876</strain>
    </source>
</reference>
<reference key="2">
    <citation type="journal article" date="2007" name="Genome Biol.">
        <title>Assembly of the Candida albicans genome into sixteen supercontigs aligned on the eight chromosomes.</title>
        <authorList>
            <person name="van het Hoog M."/>
            <person name="Rast T.J."/>
            <person name="Martchenko M."/>
            <person name="Grindle S."/>
            <person name="Dignard D."/>
            <person name="Hogues H."/>
            <person name="Cuomo C."/>
            <person name="Berriman M."/>
            <person name="Scherer S."/>
            <person name="Magee B.B."/>
            <person name="Whiteway M."/>
            <person name="Chibana H."/>
            <person name="Nantel A."/>
            <person name="Magee P.T."/>
        </authorList>
    </citation>
    <scope>GENOME REANNOTATION</scope>
    <source>
        <strain>SC5314 / ATCC MYA-2876</strain>
    </source>
</reference>
<reference key="3">
    <citation type="journal article" date="2013" name="Genome Biol.">
        <title>Assembly of a phased diploid Candida albicans genome facilitates allele-specific measurements and provides a simple model for repeat and indel structure.</title>
        <authorList>
            <person name="Muzzey D."/>
            <person name="Schwartz K."/>
            <person name="Weissman J.S."/>
            <person name="Sherlock G."/>
        </authorList>
    </citation>
    <scope>NUCLEOTIDE SEQUENCE [LARGE SCALE GENOMIC DNA]</scope>
    <scope>GENOME REANNOTATION</scope>
    <source>
        <strain>SC5314 / ATCC MYA-2876</strain>
    </source>
</reference>
<organism>
    <name type="scientific">Candida albicans (strain SC5314 / ATCC MYA-2876)</name>
    <name type="common">Yeast</name>
    <dbReference type="NCBI Taxonomy" id="237561"/>
    <lineage>
        <taxon>Eukaryota</taxon>
        <taxon>Fungi</taxon>
        <taxon>Dikarya</taxon>
        <taxon>Ascomycota</taxon>
        <taxon>Saccharomycotina</taxon>
        <taxon>Pichiomycetes</taxon>
        <taxon>Debaryomycetaceae</taxon>
        <taxon>Candida/Lodderomyces clade</taxon>
        <taxon>Candida</taxon>
    </lineage>
</organism>
<name>NNRE_CANAL</name>
<evidence type="ECO:0000255" key="1">
    <source>
        <dbReference type="HAMAP-Rule" id="MF_03159"/>
    </source>
</evidence>
<evidence type="ECO:0000305" key="2"/>
<gene>
    <name type="ordered locus">CAALFM_C102220CA</name>
    <name type="ORF">CaO19.11163</name>
    <name type="ORF">CaO19.3679</name>
</gene>
<keyword id="KW-0963">Cytoplasm</keyword>
<keyword id="KW-0413">Isomerase</keyword>
<keyword id="KW-0479">Metal-binding</keyword>
<keyword id="KW-0496">Mitochondrion</keyword>
<keyword id="KW-0520">NAD</keyword>
<keyword id="KW-0521">NADP</keyword>
<keyword id="KW-0547">Nucleotide-binding</keyword>
<keyword id="KW-0630">Potassium</keyword>
<keyword id="KW-1185">Reference proteome</keyword>